<proteinExistence type="inferred from homology"/>
<keyword id="KW-0963">Cytoplasm</keyword>
<keyword id="KW-0488">Methylation</keyword>
<keyword id="KW-0648">Protein biosynthesis</keyword>
<reference key="1">
    <citation type="submission" date="2007-04" db="EMBL/GenBank/DDBJ databases">
        <title>Genome sequence of the thermophilic hydrogen-producing bacterium Caldicellulosiruptor saccharolyticus DSM 8903.</title>
        <authorList>
            <person name="Copeland A."/>
            <person name="Lucas S."/>
            <person name="Lapidus A."/>
            <person name="Barry K."/>
            <person name="Detter J.C."/>
            <person name="Glavina del Rio T."/>
            <person name="Hammon N."/>
            <person name="Israni S."/>
            <person name="Dalin E."/>
            <person name="Tice H."/>
            <person name="Pitluck S."/>
            <person name="Kiss H."/>
            <person name="Brettin T."/>
            <person name="Bruce D."/>
            <person name="Han C."/>
            <person name="Schmutz J."/>
            <person name="Larimer F."/>
            <person name="Land M."/>
            <person name="Hauser L."/>
            <person name="Kyrpides N."/>
            <person name="Lykidis A."/>
            <person name="van de Werken H.J.G."/>
            <person name="Verhaart M.R.A."/>
            <person name="VanFossen A.L."/>
            <person name="Lewis D.L."/>
            <person name="Nichols J.D."/>
            <person name="Goorissen H.P."/>
            <person name="van Niel E.W.J."/>
            <person name="Stams F.J.M."/>
            <person name="Willquist K.U."/>
            <person name="Ward D.E."/>
            <person name="van der Oost J."/>
            <person name="Kelly R.M."/>
            <person name="Kengen S.M.W."/>
            <person name="Richardson P."/>
        </authorList>
    </citation>
    <scope>NUCLEOTIDE SEQUENCE [LARGE SCALE GENOMIC DNA]</scope>
    <source>
        <strain>ATCC 43494 / DSM 8903 / Tp8T 6331</strain>
    </source>
</reference>
<name>RF1_CALS8</name>
<protein>
    <recommendedName>
        <fullName evidence="1">Peptide chain release factor 1</fullName>
        <shortName evidence="1">RF-1</shortName>
    </recommendedName>
</protein>
<comment type="function">
    <text evidence="1">Peptide chain release factor 1 directs the termination of translation in response to the peptide chain termination codons UAG and UAA.</text>
</comment>
<comment type="subcellular location">
    <subcellularLocation>
        <location evidence="1">Cytoplasm</location>
    </subcellularLocation>
</comment>
<comment type="PTM">
    <text evidence="1">Methylated by PrmC. Methylation increases the termination efficiency of RF1.</text>
</comment>
<comment type="similarity">
    <text evidence="1">Belongs to the prokaryotic/mitochondrial release factor family.</text>
</comment>
<dbReference type="EMBL" id="CP000679">
    <property type="protein sequence ID" value="ABP67116.1"/>
    <property type="molecule type" value="Genomic_DNA"/>
</dbReference>
<dbReference type="RefSeq" id="WP_011917051.1">
    <property type="nucleotide sequence ID" value="NC_009437.1"/>
</dbReference>
<dbReference type="SMR" id="A4XJN1"/>
<dbReference type="STRING" id="351627.Csac_1523"/>
<dbReference type="KEGG" id="csc:Csac_1523"/>
<dbReference type="eggNOG" id="COG0216">
    <property type="taxonomic scope" value="Bacteria"/>
</dbReference>
<dbReference type="HOGENOM" id="CLU_036856_0_1_9"/>
<dbReference type="OrthoDB" id="9806673at2"/>
<dbReference type="Proteomes" id="UP000000256">
    <property type="component" value="Chromosome"/>
</dbReference>
<dbReference type="GO" id="GO:0005737">
    <property type="term" value="C:cytoplasm"/>
    <property type="evidence" value="ECO:0007669"/>
    <property type="project" value="UniProtKB-SubCell"/>
</dbReference>
<dbReference type="GO" id="GO:0016149">
    <property type="term" value="F:translation release factor activity, codon specific"/>
    <property type="evidence" value="ECO:0007669"/>
    <property type="project" value="UniProtKB-UniRule"/>
</dbReference>
<dbReference type="FunFam" id="3.30.160.20:FF:000004">
    <property type="entry name" value="Peptide chain release factor 1"/>
    <property type="match status" value="1"/>
</dbReference>
<dbReference type="FunFam" id="3.30.70.1660:FF:000002">
    <property type="entry name" value="Peptide chain release factor 1"/>
    <property type="match status" value="1"/>
</dbReference>
<dbReference type="FunFam" id="3.30.70.1660:FF:000004">
    <property type="entry name" value="Peptide chain release factor 1"/>
    <property type="match status" value="1"/>
</dbReference>
<dbReference type="Gene3D" id="3.30.160.20">
    <property type="match status" value="1"/>
</dbReference>
<dbReference type="Gene3D" id="3.30.70.1660">
    <property type="match status" value="1"/>
</dbReference>
<dbReference type="Gene3D" id="6.10.140.1950">
    <property type="match status" value="1"/>
</dbReference>
<dbReference type="HAMAP" id="MF_00093">
    <property type="entry name" value="Rel_fac_1"/>
    <property type="match status" value="1"/>
</dbReference>
<dbReference type="InterPro" id="IPR005139">
    <property type="entry name" value="PCRF"/>
</dbReference>
<dbReference type="InterPro" id="IPR000352">
    <property type="entry name" value="Pep_chain_release_fac_I"/>
</dbReference>
<dbReference type="InterPro" id="IPR045853">
    <property type="entry name" value="Pep_chain_release_fac_I_sf"/>
</dbReference>
<dbReference type="InterPro" id="IPR050057">
    <property type="entry name" value="Prokaryotic/Mito_RF"/>
</dbReference>
<dbReference type="InterPro" id="IPR004373">
    <property type="entry name" value="RF-1"/>
</dbReference>
<dbReference type="NCBIfam" id="TIGR00019">
    <property type="entry name" value="prfA"/>
    <property type="match status" value="1"/>
</dbReference>
<dbReference type="NCBIfam" id="NF001859">
    <property type="entry name" value="PRK00591.1"/>
    <property type="match status" value="1"/>
</dbReference>
<dbReference type="PANTHER" id="PTHR43804">
    <property type="entry name" value="LD18447P"/>
    <property type="match status" value="1"/>
</dbReference>
<dbReference type="PANTHER" id="PTHR43804:SF7">
    <property type="entry name" value="LD18447P"/>
    <property type="match status" value="1"/>
</dbReference>
<dbReference type="Pfam" id="PF03462">
    <property type="entry name" value="PCRF"/>
    <property type="match status" value="1"/>
</dbReference>
<dbReference type="Pfam" id="PF00472">
    <property type="entry name" value="RF-1"/>
    <property type="match status" value="1"/>
</dbReference>
<dbReference type="SMART" id="SM00937">
    <property type="entry name" value="PCRF"/>
    <property type="match status" value="1"/>
</dbReference>
<dbReference type="SUPFAM" id="SSF75620">
    <property type="entry name" value="Release factor"/>
    <property type="match status" value="1"/>
</dbReference>
<dbReference type="PROSITE" id="PS00745">
    <property type="entry name" value="RF_PROK_I"/>
    <property type="match status" value="1"/>
</dbReference>
<organism>
    <name type="scientific">Caldicellulosiruptor saccharolyticus (strain ATCC 43494 / DSM 8903 / Tp8T 6331)</name>
    <dbReference type="NCBI Taxonomy" id="351627"/>
    <lineage>
        <taxon>Bacteria</taxon>
        <taxon>Bacillati</taxon>
        <taxon>Bacillota</taxon>
        <taxon>Bacillota incertae sedis</taxon>
        <taxon>Caldicellulosiruptorales</taxon>
        <taxon>Caldicellulosiruptoraceae</taxon>
        <taxon>Caldicellulosiruptor</taxon>
    </lineage>
</organism>
<accession>A4XJN1</accession>
<feature type="chain" id="PRO_1000004870" description="Peptide chain release factor 1">
    <location>
        <begin position="1"/>
        <end position="355"/>
    </location>
</feature>
<feature type="modified residue" description="N5-methylglutamine" evidence="1">
    <location>
        <position position="233"/>
    </location>
</feature>
<evidence type="ECO:0000255" key="1">
    <source>
        <dbReference type="HAMAP-Rule" id="MF_00093"/>
    </source>
</evidence>
<sequence>MIEKLQVIEEKYLELEKKISDPEIINNNQEWQKLMKEHSNLQPIVEKFREYKRIIKTIEEAEELLDTNLDEDFEKLVKEELNQAKEQKEIVERELKILLLPKDPNDEKNVIMEIRAGAGGEEAALFAAELFRMYSRYAERKNWKVEVMSTSESDLDGFKEVIFMISGKGAYSRLKYESGVHRVQRVPVTESGGRIHTSTATVAVLPEVEDVEVEIREEDLEIETFRAGGAGGQHVNKTESAVRITHKPTGIVVSCQDERSQHANRDRAMKILRARLYDYYQSLQQKEIESQRRSQVGTGDRSERIRTYNFPQGRVTDHRIGLTLYKLEQVLDGDLDEIIDALITHFQTERLKEVG</sequence>
<gene>
    <name evidence="1" type="primary">prfA</name>
    <name type="ordered locus">Csac_1523</name>
</gene>